<sequence>MLLIPAIDLKDGRCVRLRQGDLDDVTVFSEDPAAIASNWLAQGARRLHLVDLNGAVAGKPKNEAPIKAILKAVGDDIPVQIGGGIRDLDTIERYLDAGISYVIIGTAAVKNPGFLHDACGAFPGQIIVGLDARDGKIATDGWSKLTRHDVLDLAKKFEDYGCEAIIYTDIGRDGMLSGVNVEATVRLAQHVRIPVYASGGIAGMADIEALCAVEADGVEGAILGRSIYEGALDFKVAQARADELTS</sequence>
<reference key="1">
    <citation type="journal article" date="2006" name="J. Bacteriol.">
        <title>Comparison of the genome sequence of the poultry pathogen Bordetella avium with those of B. bronchiseptica, B. pertussis, and B. parapertussis reveals extensive diversity in surface structures associated with host interaction.</title>
        <authorList>
            <person name="Sebaihia M."/>
            <person name="Preston A."/>
            <person name="Maskell D.J."/>
            <person name="Kuzmiak H."/>
            <person name="Connell T.D."/>
            <person name="King N.D."/>
            <person name="Orndorff P.E."/>
            <person name="Miyamoto D.M."/>
            <person name="Thomson N.R."/>
            <person name="Harris D."/>
            <person name="Goble A."/>
            <person name="Lord A."/>
            <person name="Murphy L."/>
            <person name="Quail M.A."/>
            <person name="Rutter S."/>
            <person name="Squares R."/>
            <person name="Squares S."/>
            <person name="Woodward J."/>
            <person name="Parkhill J."/>
            <person name="Temple L.M."/>
        </authorList>
    </citation>
    <scope>NUCLEOTIDE SEQUENCE [LARGE SCALE GENOMIC DNA]</scope>
    <source>
        <strain>197N</strain>
    </source>
</reference>
<organism>
    <name type="scientific">Bordetella avium (strain 197N)</name>
    <dbReference type="NCBI Taxonomy" id="360910"/>
    <lineage>
        <taxon>Bacteria</taxon>
        <taxon>Pseudomonadati</taxon>
        <taxon>Pseudomonadota</taxon>
        <taxon>Betaproteobacteria</taxon>
        <taxon>Burkholderiales</taxon>
        <taxon>Alcaligenaceae</taxon>
        <taxon>Bordetella</taxon>
    </lineage>
</organism>
<dbReference type="EC" id="5.3.1.16" evidence="1"/>
<dbReference type="EMBL" id="AM167904">
    <property type="protein sequence ID" value="CAJ50928.1"/>
    <property type="molecule type" value="Genomic_DNA"/>
</dbReference>
<dbReference type="RefSeq" id="WP_012418955.1">
    <property type="nucleotide sequence ID" value="NC_010645.1"/>
</dbReference>
<dbReference type="SMR" id="Q2KTT2"/>
<dbReference type="STRING" id="360910.BAV3318"/>
<dbReference type="GeneID" id="92933423"/>
<dbReference type="KEGG" id="bav:BAV3318"/>
<dbReference type="eggNOG" id="COG0106">
    <property type="taxonomic scope" value="Bacteria"/>
</dbReference>
<dbReference type="HOGENOM" id="CLU_048577_1_1_4"/>
<dbReference type="OrthoDB" id="9807749at2"/>
<dbReference type="UniPathway" id="UPA00031">
    <property type="reaction ID" value="UER00009"/>
</dbReference>
<dbReference type="Proteomes" id="UP000001977">
    <property type="component" value="Chromosome"/>
</dbReference>
<dbReference type="GO" id="GO:0005737">
    <property type="term" value="C:cytoplasm"/>
    <property type="evidence" value="ECO:0007669"/>
    <property type="project" value="UniProtKB-SubCell"/>
</dbReference>
<dbReference type="GO" id="GO:0003949">
    <property type="term" value="F:1-(5-phosphoribosyl)-5-[(5-phosphoribosylamino)methylideneamino]imidazole-4-carboxamide isomerase activity"/>
    <property type="evidence" value="ECO:0007669"/>
    <property type="project" value="UniProtKB-UniRule"/>
</dbReference>
<dbReference type="GO" id="GO:0000105">
    <property type="term" value="P:L-histidine biosynthetic process"/>
    <property type="evidence" value="ECO:0007669"/>
    <property type="project" value="UniProtKB-UniRule"/>
</dbReference>
<dbReference type="GO" id="GO:0000162">
    <property type="term" value="P:L-tryptophan biosynthetic process"/>
    <property type="evidence" value="ECO:0007669"/>
    <property type="project" value="TreeGrafter"/>
</dbReference>
<dbReference type="CDD" id="cd04732">
    <property type="entry name" value="HisA"/>
    <property type="match status" value="1"/>
</dbReference>
<dbReference type="FunFam" id="3.20.20.70:FF:000009">
    <property type="entry name" value="1-(5-phosphoribosyl)-5-[(5-phosphoribosylamino)methylideneamino] imidazole-4-carboxamide isomerase"/>
    <property type="match status" value="1"/>
</dbReference>
<dbReference type="Gene3D" id="3.20.20.70">
    <property type="entry name" value="Aldolase class I"/>
    <property type="match status" value="1"/>
</dbReference>
<dbReference type="HAMAP" id="MF_01014">
    <property type="entry name" value="HisA"/>
    <property type="match status" value="1"/>
</dbReference>
<dbReference type="InterPro" id="IPR013785">
    <property type="entry name" value="Aldolase_TIM"/>
</dbReference>
<dbReference type="InterPro" id="IPR006062">
    <property type="entry name" value="His_biosynth"/>
</dbReference>
<dbReference type="InterPro" id="IPR006063">
    <property type="entry name" value="HisA_bact_arch"/>
</dbReference>
<dbReference type="InterPro" id="IPR044524">
    <property type="entry name" value="Isoase_HisA-like"/>
</dbReference>
<dbReference type="InterPro" id="IPR023016">
    <property type="entry name" value="Isoase_HisA-like_bact"/>
</dbReference>
<dbReference type="InterPro" id="IPR011060">
    <property type="entry name" value="RibuloseP-bd_barrel"/>
</dbReference>
<dbReference type="NCBIfam" id="TIGR00007">
    <property type="entry name" value="1-(5-phosphoribosyl)-5-[(5-phosphoribosylamino)methylideneamino]imidazole-4-carboxamide isomerase"/>
    <property type="match status" value="1"/>
</dbReference>
<dbReference type="PANTHER" id="PTHR43090">
    <property type="entry name" value="1-(5-PHOSPHORIBOSYL)-5-[(5-PHOSPHORIBOSYLAMINO)METHYLIDENEAMINO] IMIDAZOLE-4-CARBOXAMIDE ISOMERASE"/>
    <property type="match status" value="1"/>
</dbReference>
<dbReference type="PANTHER" id="PTHR43090:SF2">
    <property type="entry name" value="1-(5-PHOSPHORIBOSYL)-5-[(5-PHOSPHORIBOSYLAMINO)METHYLIDENEAMINO] IMIDAZOLE-4-CARBOXAMIDE ISOMERASE"/>
    <property type="match status" value="1"/>
</dbReference>
<dbReference type="Pfam" id="PF00977">
    <property type="entry name" value="His_biosynth"/>
    <property type="match status" value="1"/>
</dbReference>
<dbReference type="SUPFAM" id="SSF51366">
    <property type="entry name" value="Ribulose-phoshate binding barrel"/>
    <property type="match status" value="1"/>
</dbReference>
<keyword id="KW-0028">Amino-acid biosynthesis</keyword>
<keyword id="KW-0963">Cytoplasm</keyword>
<keyword id="KW-0368">Histidine biosynthesis</keyword>
<keyword id="KW-0413">Isomerase</keyword>
<keyword id="KW-1185">Reference proteome</keyword>
<evidence type="ECO:0000255" key="1">
    <source>
        <dbReference type="HAMAP-Rule" id="MF_01014"/>
    </source>
</evidence>
<comment type="catalytic activity">
    <reaction evidence="1">
        <text>1-(5-phospho-beta-D-ribosyl)-5-[(5-phospho-beta-D-ribosylamino)methylideneamino]imidazole-4-carboxamide = 5-[(5-phospho-1-deoxy-D-ribulos-1-ylimino)methylamino]-1-(5-phospho-beta-D-ribosyl)imidazole-4-carboxamide</text>
        <dbReference type="Rhea" id="RHEA:15469"/>
        <dbReference type="ChEBI" id="CHEBI:58435"/>
        <dbReference type="ChEBI" id="CHEBI:58525"/>
        <dbReference type="EC" id="5.3.1.16"/>
    </reaction>
</comment>
<comment type="pathway">
    <text evidence="1">Amino-acid biosynthesis; L-histidine biosynthesis; L-histidine from 5-phospho-alpha-D-ribose 1-diphosphate: step 4/9.</text>
</comment>
<comment type="subcellular location">
    <subcellularLocation>
        <location evidence="1">Cytoplasm</location>
    </subcellularLocation>
</comment>
<comment type="similarity">
    <text evidence="1">Belongs to the HisA/HisF family.</text>
</comment>
<feature type="chain" id="PRO_0000290453" description="1-(5-phosphoribosyl)-5-[(5-phosphoribosylamino)methylideneamino] imidazole-4-carboxamide isomerase">
    <location>
        <begin position="1"/>
        <end position="246"/>
    </location>
</feature>
<feature type="active site" description="Proton acceptor" evidence="1">
    <location>
        <position position="8"/>
    </location>
</feature>
<feature type="active site" description="Proton donor" evidence="1">
    <location>
        <position position="131"/>
    </location>
</feature>
<protein>
    <recommendedName>
        <fullName evidence="1">1-(5-phosphoribosyl)-5-[(5-phosphoribosylamino)methylideneamino] imidazole-4-carboxamide isomerase</fullName>
        <ecNumber evidence="1">5.3.1.16</ecNumber>
    </recommendedName>
    <alternativeName>
        <fullName evidence="1">Phosphoribosylformimino-5-aminoimidazole carboxamide ribotide isomerase</fullName>
    </alternativeName>
</protein>
<proteinExistence type="inferred from homology"/>
<name>HIS4_BORA1</name>
<accession>Q2KTT2</accession>
<gene>
    <name evidence="1" type="primary">hisA</name>
    <name type="ordered locus">BAV3318</name>
</gene>